<name>DPOL_ADEB3</name>
<sequence length="1023" mass="117729">MCVYKTYKGKLKITSIPARADRPRLPFPLNFLIHKRKLYLIDTIAEVQRCADCGSYFKQTHTCSTRRRDFYFHHINTQSSDWWEEIKFFPLGAHPDTRRLFVVYDVETYTWHGSFGKQLMPFMLVFTLFGDAQLCEQAVNIAKKQKWSSWPKQANTFYYLNPQRNKVGSLFKQYRDALQEAASTLLWRQFLADNPCLENLCLKLGYVHASDIPFEELCTLELKGQPTFLEVYVVGHNINGFDEIVLAAQVINNKQGIPAAFKVSRNFMPRCGKILFNDLTFALPNPTHAARKDFKDWEEGTPTSADYKFQFVKFMVRDTFALTHTSLRNAAAAYALPVEKGCCPYKAVNEFYMLGTYRTDADSFPQRDYWSSDEEYLLNKSLWLQENSGAYDIVQRTLDYCAMDVLVTAELVKKLQASYLDFVHTSVGLPHCNFNVLQRPTISSNSHAIFRQVVYRSQRPNRSSLGNFLLAPSNEMYDYVRESIRGGRCYPTYIGVLTEAIYVYDICGMYASALTHPFPAGKPLNPFDRALAIKNWQDRLTQLHRPIDYFDRTLLPAIFTIDADPPPEAFLDVIPPFCSRKGGRLCWTNETLRGEVVTCLDAITLHNRGWRVQILNDPRTTVFPQWECLARDYVQLNIAAKERADKEKNQTLRSIAKLLSNALYGSFATKLDNRVTVFSDQMEDKYVRGISDGTYDIKSTAFVETDNLSSSVMAELKITYSPVKQQTDATRKHRQCTPTSNSSSDEDAPFYTLGDPQNHHVTYTYKPITFLEADDSALCLHTLQKKSSLIFNNRYPSHIASFVLAWTRAFVSEWADILYLEDRGTPLEDRILKFVYGDTDSMFLTQRGKELMDTRGKHRLKGNNRPLVFDPTNPQLTWLVECETQCPRCHGDAHSQESVFLAPKLYALKNIYCPSCRAESSGKLRAKGHATSQLSYDLLVTCYYSTEQLGDEKFGTSRLSLRRSLVSRQTHQQPFTVTETTLARTLRPWKDRTLRAIDRHRLAPYSNSHPNPRNKELCWMEMY</sequence>
<dbReference type="EC" id="2.7.7.7" evidence="3"/>
<dbReference type="EMBL" id="AF061654">
    <property type="protein sequence ID" value="AAC16240.1"/>
    <property type="molecule type" value="Genomic_DNA"/>
</dbReference>
<dbReference type="GO" id="GO:0042025">
    <property type="term" value="C:host cell nucleus"/>
    <property type="evidence" value="ECO:0007669"/>
    <property type="project" value="UniProtKB-SubCell"/>
</dbReference>
<dbReference type="GO" id="GO:0008408">
    <property type="term" value="F:3'-5' exonuclease activity"/>
    <property type="evidence" value="ECO:0007669"/>
    <property type="project" value="UniProtKB-UniRule"/>
</dbReference>
<dbReference type="GO" id="GO:0003677">
    <property type="term" value="F:DNA binding"/>
    <property type="evidence" value="ECO:0007669"/>
    <property type="project" value="UniProtKB-UniRule"/>
</dbReference>
<dbReference type="GO" id="GO:0003887">
    <property type="term" value="F:DNA-directed DNA polymerase activity"/>
    <property type="evidence" value="ECO:0007669"/>
    <property type="project" value="UniProtKB-UniRule"/>
</dbReference>
<dbReference type="GO" id="GO:0000166">
    <property type="term" value="F:nucleotide binding"/>
    <property type="evidence" value="ECO:0007669"/>
    <property type="project" value="UniProtKB-UniRule"/>
</dbReference>
<dbReference type="GO" id="GO:0006261">
    <property type="term" value="P:DNA-templated DNA replication"/>
    <property type="evidence" value="ECO:0007669"/>
    <property type="project" value="UniProtKB-UniRule"/>
</dbReference>
<dbReference type="GO" id="GO:0039693">
    <property type="term" value="P:viral DNA genome replication"/>
    <property type="evidence" value="ECO:0007669"/>
    <property type="project" value="UniProtKB-UniRule"/>
</dbReference>
<dbReference type="Gene3D" id="3.90.1600.10">
    <property type="entry name" value="Palm domain of DNA polymerase"/>
    <property type="match status" value="1"/>
</dbReference>
<dbReference type="HAMAP" id="MF_04055">
    <property type="entry name" value="ADV_DPOL"/>
    <property type="match status" value="1"/>
</dbReference>
<dbReference type="InterPro" id="IPR006172">
    <property type="entry name" value="DNA-dir_DNA_pol_B"/>
</dbReference>
<dbReference type="InterPro" id="IPR014382">
    <property type="entry name" value="DNA-dir_DNA_pol_B_adenovir"/>
</dbReference>
<dbReference type="InterPro" id="IPR017964">
    <property type="entry name" value="DNA-dir_DNA_pol_B_CS"/>
</dbReference>
<dbReference type="InterPro" id="IPR004868">
    <property type="entry name" value="DNA-dir_DNA_pol_B_mt/vir"/>
</dbReference>
<dbReference type="InterPro" id="IPR043502">
    <property type="entry name" value="DNA/RNA_pol_sf"/>
</dbReference>
<dbReference type="InterPro" id="IPR023211">
    <property type="entry name" value="DNA_pol_palm_dom_sf"/>
</dbReference>
<dbReference type="InterPro" id="IPR012337">
    <property type="entry name" value="RNaseH-like_sf"/>
</dbReference>
<dbReference type="Pfam" id="PF03175">
    <property type="entry name" value="DNA_pol_B_2"/>
    <property type="match status" value="1"/>
</dbReference>
<dbReference type="PIRSF" id="PIRSF000788">
    <property type="entry name" value="DPol_ADV"/>
    <property type="match status" value="1"/>
</dbReference>
<dbReference type="PRINTS" id="PR00106">
    <property type="entry name" value="DNAPOLB"/>
</dbReference>
<dbReference type="SMART" id="SM00486">
    <property type="entry name" value="POLBc"/>
    <property type="match status" value="1"/>
</dbReference>
<dbReference type="SUPFAM" id="SSF56672">
    <property type="entry name" value="DNA/RNA polymerases"/>
    <property type="match status" value="1"/>
</dbReference>
<dbReference type="SUPFAM" id="SSF53098">
    <property type="entry name" value="Ribonuclease H-like"/>
    <property type="match status" value="1"/>
</dbReference>
<dbReference type="PROSITE" id="PS00116">
    <property type="entry name" value="DNA_POLYMERASE_B"/>
    <property type="match status" value="1"/>
</dbReference>
<proteinExistence type="inferred from homology"/>
<feature type="chain" id="PRO_0000046491" description="DNA polymerase">
    <location>
        <begin position="1"/>
        <end position="1023"/>
    </location>
</feature>
<feature type="region of interest" description="Disordered" evidence="4">
    <location>
        <begin position="726"/>
        <end position="751"/>
    </location>
</feature>
<reference key="1">
    <citation type="journal article" date="1998" name="Intervirology">
        <title>Sequencing analysis of the region encoding the DNA polymerase of bovine adenovirus serotypes 2 and 3.</title>
        <authorList>
            <person name="Yagubi A."/>
            <person name="Ojkic D."/>
            <person name="Bautista D."/>
            <person name="Haj-Ahmad Y."/>
        </authorList>
    </citation>
    <scope>NUCLEOTIDE SEQUENCE [GENOMIC DNA]</scope>
    <source>
        <strain>WBR-1</strain>
    </source>
</reference>
<evidence type="ECO:0000250" key="1">
    <source>
        <dbReference type="UniProtKB" id="P03261"/>
    </source>
</evidence>
<evidence type="ECO:0000250" key="2">
    <source>
        <dbReference type="UniProtKB" id="P04495"/>
    </source>
</evidence>
<evidence type="ECO:0000255" key="3">
    <source>
        <dbReference type="HAMAP-Rule" id="MF_04055"/>
    </source>
</evidence>
<evidence type="ECO:0000256" key="4">
    <source>
        <dbReference type="SAM" id="MobiDB-lite"/>
    </source>
</evidence>
<evidence type="ECO:0000305" key="5"/>
<organism>
    <name type="scientific">Bovine adenovirus B serotype 3</name>
    <name type="common">BAdV-3</name>
    <name type="synonym">Mastadenovirus bos3</name>
    <dbReference type="NCBI Taxonomy" id="10510"/>
    <lineage>
        <taxon>Viruses</taxon>
        <taxon>Varidnaviria</taxon>
        <taxon>Bamfordvirae</taxon>
        <taxon>Preplasmiviricota</taxon>
        <taxon>Tectiliviricetes</taxon>
        <taxon>Rowavirales</taxon>
        <taxon>Adenoviridae</taxon>
        <taxon>Mastadenovirus</taxon>
        <taxon>Bovine mastadenovirus B</taxon>
    </lineage>
</organism>
<gene>
    <name evidence="3" type="primary">POL</name>
</gene>
<accession>O72540</accession>
<organismHost>
    <name type="scientific">Bos taurus</name>
    <name type="common">Bovine</name>
    <dbReference type="NCBI Taxonomy" id="9913"/>
</organismHost>
<protein>
    <recommendedName>
        <fullName evidence="3">DNA polymerase</fullName>
        <ecNumber evidence="3">2.7.7.7</ecNumber>
    </recommendedName>
</protein>
<keyword id="KW-0235">DNA replication</keyword>
<keyword id="KW-0238">DNA-binding</keyword>
<keyword id="KW-0239">DNA-directed DNA polymerase</keyword>
<keyword id="KW-1048">Host nucleus</keyword>
<keyword id="KW-0548">Nucleotidyltransferase</keyword>
<keyword id="KW-0808">Transferase</keyword>
<keyword id="KW-1194">Viral DNA replication</keyword>
<comment type="function">
    <text evidence="1 2 3">Eukaryotic-type DNA polymerase involved in viral genomic replication. DNA synthesis is protein primed, and acts in a strand displacement replication. Assembles in complex with viral pTP, DBP, host NFIA and host POU2F1/OCT1 on viral origin of replication. The polymerase covalently transfers dCMP onto pTP, thereby initiating complementary strand synthesis.</text>
</comment>
<comment type="catalytic activity">
    <reaction evidence="3">
        <text>DNA(n) + a 2'-deoxyribonucleoside 5'-triphosphate = DNA(n+1) + diphosphate</text>
        <dbReference type="Rhea" id="RHEA:22508"/>
        <dbReference type="Rhea" id="RHEA-COMP:17339"/>
        <dbReference type="Rhea" id="RHEA-COMP:17340"/>
        <dbReference type="ChEBI" id="CHEBI:33019"/>
        <dbReference type="ChEBI" id="CHEBI:61560"/>
        <dbReference type="ChEBI" id="CHEBI:173112"/>
        <dbReference type="EC" id="2.7.7.7"/>
    </reaction>
</comment>
<comment type="subunit">
    <text evidence="2 3">Heterodimer with the terminal protein; this heterodimer binds to bp 9 to 18 of the genome. Forms a complex with viral pTP, DBP and hosts NFIA and POU2F1/OCT1 for initiation of replication.</text>
</comment>
<comment type="subcellular location">
    <subcellularLocation>
        <location evidence="1 3">Host nucleus</location>
    </subcellularLocation>
</comment>
<comment type="miscellaneous">
    <text evidence="3">This DNA polymerase requires a protein as a primer.</text>
</comment>
<comment type="similarity">
    <text evidence="3 5">Belongs to the DNA polymerase type-B family.</text>
</comment>